<comment type="function">
    <text evidence="1">Catalyzes the stereoinversion of LL-2,6-diaminopimelate (L,L-DAP) to meso-diaminopimelate (meso-DAP), a precursor of L-lysine and an essential component of the bacterial peptidoglycan.</text>
</comment>
<comment type="catalytic activity">
    <reaction evidence="1">
        <text>(2S,6S)-2,6-diaminopimelate = meso-2,6-diaminopimelate</text>
        <dbReference type="Rhea" id="RHEA:15393"/>
        <dbReference type="ChEBI" id="CHEBI:57609"/>
        <dbReference type="ChEBI" id="CHEBI:57791"/>
        <dbReference type="EC" id="5.1.1.7"/>
    </reaction>
</comment>
<comment type="pathway">
    <text evidence="1">Amino-acid biosynthesis; L-lysine biosynthesis via DAP pathway; DL-2,6-diaminopimelate from LL-2,6-diaminopimelate: step 1/1.</text>
</comment>
<comment type="subunit">
    <text evidence="1">Homodimer.</text>
</comment>
<comment type="subcellular location">
    <subcellularLocation>
        <location evidence="1">Cytoplasm</location>
    </subcellularLocation>
</comment>
<comment type="similarity">
    <text evidence="1">Belongs to the diaminopimelate epimerase family.</text>
</comment>
<keyword id="KW-0028">Amino-acid biosynthesis</keyword>
<keyword id="KW-0963">Cytoplasm</keyword>
<keyword id="KW-0413">Isomerase</keyword>
<keyword id="KW-0457">Lysine biosynthesis</keyword>
<keyword id="KW-1185">Reference proteome</keyword>
<gene>
    <name evidence="1" type="primary">dapF</name>
    <name type="ordered locus">Cthe_3100</name>
</gene>
<sequence>MRFTKMHGLGNDYIYVNCFEETVENPSEVAKKVSDRHFGIGSDGLVLIMPSERADFKMRMFNSDGSEAEMCGNAIRCVGKYVFDRGMTNKNVIRVETLAGIKVLELTVQDGKAKLVKVDMGEPILKPENIPVNSDKEIFRTEPVEIDGKEFKVTCVSMGNPHAVSYVKNVDIFPLEKIGPKMEHHPLFPKRINAEFVEVIDRTTLKMRVWERGAGETLACGTGACAVLVASVLNGVSERKATVKLLGGDLIIEWNENNNHVYMTGPAVKVFEGEVDLNEL</sequence>
<accession>A3DK16</accession>
<reference key="1">
    <citation type="submission" date="2007-02" db="EMBL/GenBank/DDBJ databases">
        <title>Complete sequence of Clostridium thermocellum ATCC 27405.</title>
        <authorList>
            <consortium name="US DOE Joint Genome Institute"/>
            <person name="Copeland A."/>
            <person name="Lucas S."/>
            <person name="Lapidus A."/>
            <person name="Barry K."/>
            <person name="Detter J.C."/>
            <person name="Glavina del Rio T."/>
            <person name="Hammon N."/>
            <person name="Israni S."/>
            <person name="Dalin E."/>
            <person name="Tice H."/>
            <person name="Pitluck S."/>
            <person name="Chertkov O."/>
            <person name="Brettin T."/>
            <person name="Bruce D."/>
            <person name="Han C."/>
            <person name="Tapia R."/>
            <person name="Gilna P."/>
            <person name="Schmutz J."/>
            <person name="Larimer F."/>
            <person name="Land M."/>
            <person name="Hauser L."/>
            <person name="Kyrpides N."/>
            <person name="Mikhailova N."/>
            <person name="Wu J.H.D."/>
            <person name="Newcomb M."/>
            <person name="Richardson P."/>
        </authorList>
    </citation>
    <scope>NUCLEOTIDE SEQUENCE [LARGE SCALE GENOMIC DNA]</scope>
    <source>
        <strain>ATCC 27405 / DSM 1237 / JCM 9322 / NBRC 103400 / NCIMB 10682 / NRRL B-4536 / VPI 7372</strain>
    </source>
</reference>
<dbReference type="EC" id="5.1.1.7" evidence="1"/>
<dbReference type="EMBL" id="CP000568">
    <property type="protein sequence ID" value="ABN54295.1"/>
    <property type="molecule type" value="Genomic_DNA"/>
</dbReference>
<dbReference type="RefSeq" id="WP_003511603.1">
    <property type="nucleotide sequence ID" value="NC_009012.1"/>
</dbReference>
<dbReference type="SMR" id="A3DK16"/>
<dbReference type="STRING" id="203119.Cthe_3100"/>
<dbReference type="GeneID" id="35804317"/>
<dbReference type="KEGG" id="cth:Cthe_3100"/>
<dbReference type="eggNOG" id="COG0253">
    <property type="taxonomic scope" value="Bacteria"/>
</dbReference>
<dbReference type="HOGENOM" id="CLU_053306_3_0_9"/>
<dbReference type="OrthoDB" id="9805408at2"/>
<dbReference type="UniPathway" id="UPA00034">
    <property type="reaction ID" value="UER00025"/>
</dbReference>
<dbReference type="Proteomes" id="UP000002145">
    <property type="component" value="Chromosome"/>
</dbReference>
<dbReference type="GO" id="GO:0005829">
    <property type="term" value="C:cytosol"/>
    <property type="evidence" value="ECO:0007669"/>
    <property type="project" value="TreeGrafter"/>
</dbReference>
<dbReference type="GO" id="GO:0008837">
    <property type="term" value="F:diaminopimelate epimerase activity"/>
    <property type="evidence" value="ECO:0007669"/>
    <property type="project" value="UniProtKB-UniRule"/>
</dbReference>
<dbReference type="GO" id="GO:0009089">
    <property type="term" value="P:lysine biosynthetic process via diaminopimelate"/>
    <property type="evidence" value="ECO:0007669"/>
    <property type="project" value="UniProtKB-UniRule"/>
</dbReference>
<dbReference type="FunFam" id="3.10.310.10:FF:000001">
    <property type="entry name" value="Diaminopimelate epimerase"/>
    <property type="match status" value="1"/>
</dbReference>
<dbReference type="FunFam" id="3.10.310.10:FF:000009">
    <property type="entry name" value="Diaminopimelate epimerase chloroplastic"/>
    <property type="match status" value="1"/>
</dbReference>
<dbReference type="Gene3D" id="3.10.310.10">
    <property type="entry name" value="Diaminopimelate Epimerase, Chain A, domain 1"/>
    <property type="match status" value="2"/>
</dbReference>
<dbReference type="HAMAP" id="MF_00197">
    <property type="entry name" value="DAP_epimerase"/>
    <property type="match status" value="1"/>
</dbReference>
<dbReference type="InterPro" id="IPR018510">
    <property type="entry name" value="DAP_epimerase_AS"/>
</dbReference>
<dbReference type="InterPro" id="IPR001653">
    <property type="entry name" value="DAP_epimerase_DapF"/>
</dbReference>
<dbReference type="NCBIfam" id="TIGR00652">
    <property type="entry name" value="DapF"/>
    <property type="match status" value="1"/>
</dbReference>
<dbReference type="PANTHER" id="PTHR31689:SF0">
    <property type="entry name" value="DIAMINOPIMELATE EPIMERASE"/>
    <property type="match status" value="1"/>
</dbReference>
<dbReference type="PANTHER" id="PTHR31689">
    <property type="entry name" value="DIAMINOPIMELATE EPIMERASE, CHLOROPLASTIC"/>
    <property type="match status" value="1"/>
</dbReference>
<dbReference type="Pfam" id="PF01678">
    <property type="entry name" value="DAP_epimerase"/>
    <property type="match status" value="2"/>
</dbReference>
<dbReference type="SUPFAM" id="SSF54506">
    <property type="entry name" value="Diaminopimelate epimerase-like"/>
    <property type="match status" value="1"/>
</dbReference>
<dbReference type="PROSITE" id="PS01326">
    <property type="entry name" value="DAP_EPIMERASE"/>
    <property type="match status" value="1"/>
</dbReference>
<feature type="chain" id="PRO_1000124407" description="Diaminopimelate epimerase">
    <location>
        <begin position="1"/>
        <end position="280"/>
    </location>
</feature>
<feature type="active site" description="Proton donor" evidence="1">
    <location>
        <position position="71"/>
    </location>
</feature>
<feature type="active site" description="Proton acceptor" evidence="1">
    <location>
        <position position="220"/>
    </location>
</feature>
<feature type="binding site" evidence="1">
    <location>
        <position position="11"/>
    </location>
    <ligand>
        <name>substrate</name>
    </ligand>
</feature>
<feature type="binding site" evidence="1">
    <location>
        <position position="62"/>
    </location>
    <ligand>
        <name>substrate</name>
    </ligand>
</feature>
<feature type="binding site" evidence="1">
    <location>
        <begin position="72"/>
        <end position="73"/>
    </location>
    <ligand>
        <name>substrate</name>
    </ligand>
</feature>
<feature type="binding site" evidence="1">
    <location>
        <position position="160"/>
    </location>
    <ligand>
        <name>substrate</name>
    </ligand>
</feature>
<feature type="binding site" evidence="1">
    <location>
        <position position="193"/>
    </location>
    <ligand>
        <name>substrate</name>
    </ligand>
</feature>
<feature type="binding site" evidence="1">
    <location>
        <begin position="211"/>
        <end position="212"/>
    </location>
    <ligand>
        <name>substrate</name>
    </ligand>
</feature>
<feature type="binding site" evidence="1">
    <location>
        <begin position="221"/>
        <end position="222"/>
    </location>
    <ligand>
        <name>substrate</name>
    </ligand>
</feature>
<feature type="site" description="Could be important to modulate the pK values of the two catalytic cysteine residues" evidence="1">
    <location>
        <position position="162"/>
    </location>
</feature>
<feature type="site" description="Could be important to modulate the pK values of the two catalytic cysteine residues" evidence="1">
    <location>
        <position position="211"/>
    </location>
</feature>
<organism>
    <name type="scientific">Acetivibrio thermocellus (strain ATCC 27405 / DSM 1237 / JCM 9322 / NBRC 103400 / NCIMB 10682 / NRRL B-4536 / VPI 7372)</name>
    <name type="common">Clostridium thermocellum</name>
    <dbReference type="NCBI Taxonomy" id="203119"/>
    <lineage>
        <taxon>Bacteria</taxon>
        <taxon>Bacillati</taxon>
        <taxon>Bacillota</taxon>
        <taxon>Clostridia</taxon>
        <taxon>Eubacteriales</taxon>
        <taxon>Oscillospiraceae</taxon>
        <taxon>Acetivibrio</taxon>
    </lineage>
</organism>
<proteinExistence type="inferred from homology"/>
<protein>
    <recommendedName>
        <fullName evidence="1">Diaminopimelate epimerase</fullName>
        <shortName evidence="1">DAP epimerase</shortName>
        <ecNumber evidence="1">5.1.1.7</ecNumber>
    </recommendedName>
    <alternativeName>
        <fullName evidence="1">PLP-independent amino acid racemase</fullName>
    </alternativeName>
</protein>
<evidence type="ECO:0000255" key="1">
    <source>
        <dbReference type="HAMAP-Rule" id="MF_00197"/>
    </source>
</evidence>
<name>DAPF_ACET2</name>